<comment type="function">
    <text evidence="1">Catalyzes the attachment of isoleucine to tRNA(Ile). As IleRS can inadvertently accommodate and process structurally similar amino acids such as valine, to avoid such errors it has two additional distinct tRNA(Ile)-dependent editing activities. One activity is designated as 'pretransfer' editing and involves the hydrolysis of activated Val-AMP. The other activity is designated 'posttransfer' editing and involves deacylation of mischarged Val-tRNA(Ile).</text>
</comment>
<comment type="catalytic activity">
    <reaction evidence="1">
        <text>tRNA(Ile) + L-isoleucine + ATP = L-isoleucyl-tRNA(Ile) + AMP + diphosphate</text>
        <dbReference type="Rhea" id="RHEA:11060"/>
        <dbReference type="Rhea" id="RHEA-COMP:9666"/>
        <dbReference type="Rhea" id="RHEA-COMP:9695"/>
        <dbReference type="ChEBI" id="CHEBI:30616"/>
        <dbReference type="ChEBI" id="CHEBI:33019"/>
        <dbReference type="ChEBI" id="CHEBI:58045"/>
        <dbReference type="ChEBI" id="CHEBI:78442"/>
        <dbReference type="ChEBI" id="CHEBI:78528"/>
        <dbReference type="ChEBI" id="CHEBI:456215"/>
        <dbReference type="EC" id="6.1.1.5"/>
    </reaction>
</comment>
<comment type="cofactor">
    <cofactor evidence="1">
        <name>Zn(2+)</name>
        <dbReference type="ChEBI" id="CHEBI:29105"/>
    </cofactor>
    <text evidence="1">Binds 1 zinc ion per subunit.</text>
</comment>
<comment type="subunit">
    <text evidence="1">Monomer.</text>
</comment>
<comment type="subcellular location">
    <subcellularLocation>
        <location evidence="1">Cytoplasm</location>
    </subcellularLocation>
</comment>
<comment type="domain">
    <text evidence="1">IleRS has two distinct active sites: one for aminoacylation and one for editing. The misactivated valine is translocated from the active site to the editing site, which sterically excludes the correctly activated isoleucine. The single editing site contains two valyl binding pockets, one specific for each substrate (Val-AMP or Val-tRNA(Ile)).</text>
</comment>
<comment type="similarity">
    <text evidence="1">Belongs to the class-I aminoacyl-tRNA synthetase family. IleS type 1 subfamily.</text>
</comment>
<feature type="chain" id="PRO_1000189170" description="Isoleucine--tRNA ligase">
    <location>
        <begin position="1"/>
        <end position="920"/>
    </location>
</feature>
<feature type="short sequence motif" description="'HIGH' region">
    <location>
        <begin position="58"/>
        <end position="68"/>
    </location>
</feature>
<feature type="short sequence motif" description="'KMSKS' region">
    <location>
        <begin position="610"/>
        <end position="614"/>
    </location>
</feature>
<feature type="binding site" evidence="1">
    <location>
        <position position="569"/>
    </location>
    <ligand>
        <name>L-isoleucyl-5'-AMP</name>
        <dbReference type="ChEBI" id="CHEBI:178002"/>
    </ligand>
</feature>
<feature type="binding site" evidence="1">
    <location>
        <position position="613"/>
    </location>
    <ligand>
        <name>ATP</name>
        <dbReference type="ChEBI" id="CHEBI:30616"/>
    </ligand>
</feature>
<feature type="binding site" evidence="1">
    <location>
        <position position="895"/>
    </location>
    <ligand>
        <name>Zn(2+)</name>
        <dbReference type="ChEBI" id="CHEBI:29105"/>
    </ligand>
</feature>
<feature type="binding site" evidence="1">
    <location>
        <position position="898"/>
    </location>
    <ligand>
        <name>Zn(2+)</name>
        <dbReference type="ChEBI" id="CHEBI:29105"/>
    </ligand>
</feature>
<feature type="binding site" evidence="1">
    <location>
        <position position="910"/>
    </location>
    <ligand>
        <name>Zn(2+)</name>
        <dbReference type="ChEBI" id="CHEBI:29105"/>
    </ligand>
</feature>
<feature type="binding site" evidence="1">
    <location>
        <position position="913"/>
    </location>
    <ligand>
        <name>Zn(2+)</name>
        <dbReference type="ChEBI" id="CHEBI:29105"/>
    </ligand>
</feature>
<name>SYI_HELP2</name>
<proteinExistence type="inferred from homology"/>
<reference key="1">
    <citation type="submission" date="2008-10" db="EMBL/GenBank/DDBJ databases">
        <title>The complete genome sequence of Helicobacter pylori strain P12.</title>
        <authorList>
            <person name="Fischer W."/>
            <person name="Windhager L."/>
            <person name="Karnholz A."/>
            <person name="Zeiller M."/>
            <person name="Zimmer R."/>
            <person name="Haas R."/>
        </authorList>
    </citation>
    <scope>NUCLEOTIDE SEQUENCE [LARGE SCALE GENOMIC DNA]</scope>
    <source>
        <strain>P12</strain>
    </source>
</reference>
<organism>
    <name type="scientific">Helicobacter pylori (strain P12)</name>
    <dbReference type="NCBI Taxonomy" id="570508"/>
    <lineage>
        <taxon>Bacteria</taxon>
        <taxon>Pseudomonadati</taxon>
        <taxon>Campylobacterota</taxon>
        <taxon>Epsilonproteobacteria</taxon>
        <taxon>Campylobacterales</taxon>
        <taxon>Helicobacteraceae</taxon>
        <taxon>Helicobacter</taxon>
    </lineage>
</organism>
<sequence>MKEYKDTLNLNTTTFSMKGNLSVNEPKTYAKWQEQQAFKRMQNRKDNHGDFTLHDGPPYANGHLHLGHALNKILKDIVVKREYFKGNKIYYTPGWDCHGLPIEQQILERLEKEKTSLENPTLFREKCRDHAKKFLEIQKNEFLQLGVLGDFEDPYKTMDFKFEASIYRALVEVAKKGLLKERHKPIYWSYACESALAEAEVEYKMKKSPSIFVAFGLKKESLEKLKVKKASLVIWTTTPWTLYANVAIALKKDAVYALTQKGYLVAKALHEKLAALGVVDSEIVHEFNSNDLEYLKATNPLNQRDSLITLGEHVGLEDGTGAVHTAPGHGEEDYYLGLRYNLEVLMSVDERGCYDEGIIHNQLLDESYLGEHVFKAQKRIIEQLGDSLLLEQEIEHSYPHCWRTHKPVIYRATTQWFILMDEPFIQNDGSQKTLREVALNAIEKVEFVPNSGKNRLKTMIENRPDWCLSRQRKWGVPLAFFIDKRTNKPCFESEVLEHVANLFEKKGCDVWWEYSVKDLLPPSYQEDAMHYEKVMHILDVWFDSGSTFKAVLEDYHGEKGQSPSDVILEGSDQHRGWFQSSLLIGCILNNQAPFKKVITHGFIVDEKGEKMSKSKGNVVSLDNLLKKHGSDVVRLWVAFNDYQNDLRVSQTFFIQTEQHYKKFRNTLKFLLANFSDMDLKNLERSHDFSPLDHFILEALETTSTGVNSAFEEHDFVKGLNILMAFVTNELSGIYLDACKDSLYCDSKNNEKRQAIQMVLLAIASKLCYFLAPILTHTIEEVLEHSQVLCAFLQAKDVFDLKGISVSEKLHLKEFKKPENFEAVLALRSAFNEELDRLKKESVVKNSLECAIEVKEKALRENLIEELLMVSFVGVAKEKLSETPAFTLFKAPFYKCPRCWRFKSELENTPCKRCEEVLKER</sequence>
<protein>
    <recommendedName>
        <fullName evidence="1">Isoleucine--tRNA ligase</fullName>
        <ecNumber evidence="1">6.1.1.5</ecNumber>
    </recommendedName>
    <alternativeName>
        <fullName evidence="1">Isoleucyl-tRNA synthetase</fullName>
        <shortName evidence="1">IleRS</shortName>
    </alternativeName>
</protein>
<gene>
    <name evidence="1" type="primary">ileS</name>
    <name type="ordered locus">HPP12_1395</name>
</gene>
<keyword id="KW-0030">Aminoacyl-tRNA synthetase</keyword>
<keyword id="KW-0067">ATP-binding</keyword>
<keyword id="KW-0963">Cytoplasm</keyword>
<keyword id="KW-0436">Ligase</keyword>
<keyword id="KW-0479">Metal-binding</keyword>
<keyword id="KW-0547">Nucleotide-binding</keyword>
<keyword id="KW-0648">Protein biosynthesis</keyword>
<keyword id="KW-0862">Zinc</keyword>
<evidence type="ECO:0000255" key="1">
    <source>
        <dbReference type="HAMAP-Rule" id="MF_02002"/>
    </source>
</evidence>
<accession>B6JNR5</accession>
<dbReference type="EC" id="6.1.1.5" evidence="1"/>
<dbReference type="EMBL" id="CP001217">
    <property type="protein sequence ID" value="ACJ08543.1"/>
    <property type="molecule type" value="Genomic_DNA"/>
</dbReference>
<dbReference type="SMR" id="B6JNR5"/>
<dbReference type="KEGG" id="hpp:HPP12_1395"/>
<dbReference type="HOGENOM" id="CLU_001493_7_0_7"/>
<dbReference type="Proteomes" id="UP000008198">
    <property type="component" value="Chromosome"/>
</dbReference>
<dbReference type="GO" id="GO:0005829">
    <property type="term" value="C:cytosol"/>
    <property type="evidence" value="ECO:0007669"/>
    <property type="project" value="TreeGrafter"/>
</dbReference>
<dbReference type="GO" id="GO:0002161">
    <property type="term" value="F:aminoacyl-tRNA deacylase activity"/>
    <property type="evidence" value="ECO:0007669"/>
    <property type="project" value="InterPro"/>
</dbReference>
<dbReference type="GO" id="GO:0005524">
    <property type="term" value="F:ATP binding"/>
    <property type="evidence" value="ECO:0007669"/>
    <property type="project" value="UniProtKB-UniRule"/>
</dbReference>
<dbReference type="GO" id="GO:0004822">
    <property type="term" value="F:isoleucine-tRNA ligase activity"/>
    <property type="evidence" value="ECO:0007669"/>
    <property type="project" value="UniProtKB-UniRule"/>
</dbReference>
<dbReference type="GO" id="GO:0000049">
    <property type="term" value="F:tRNA binding"/>
    <property type="evidence" value="ECO:0007669"/>
    <property type="project" value="InterPro"/>
</dbReference>
<dbReference type="GO" id="GO:0008270">
    <property type="term" value="F:zinc ion binding"/>
    <property type="evidence" value="ECO:0007669"/>
    <property type="project" value="UniProtKB-UniRule"/>
</dbReference>
<dbReference type="GO" id="GO:0006428">
    <property type="term" value="P:isoleucyl-tRNA aminoacylation"/>
    <property type="evidence" value="ECO:0007669"/>
    <property type="project" value="UniProtKB-UniRule"/>
</dbReference>
<dbReference type="CDD" id="cd07960">
    <property type="entry name" value="Anticodon_Ia_Ile_BEm"/>
    <property type="match status" value="1"/>
</dbReference>
<dbReference type="CDD" id="cd00818">
    <property type="entry name" value="IleRS_core"/>
    <property type="match status" value="1"/>
</dbReference>
<dbReference type="FunFam" id="3.40.50.620:FF:000168">
    <property type="entry name" value="Isoleucine--tRNA ligase"/>
    <property type="match status" value="1"/>
</dbReference>
<dbReference type="Gene3D" id="1.10.730.20">
    <property type="match status" value="1"/>
</dbReference>
<dbReference type="Gene3D" id="3.40.50.620">
    <property type="entry name" value="HUPs"/>
    <property type="match status" value="2"/>
</dbReference>
<dbReference type="Gene3D" id="1.10.10.830">
    <property type="entry name" value="Ile-tRNA synthetase CP2 domain-like"/>
    <property type="match status" value="1"/>
</dbReference>
<dbReference type="HAMAP" id="MF_02002">
    <property type="entry name" value="Ile_tRNA_synth_type1"/>
    <property type="match status" value="1"/>
</dbReference>
<dbReference type="InterPro" id="IPR001412">
    <property type="entry name" value="aa-tRNA-synth_I_CS"/>
</dbReference>
<dbReference type="InterPro" id="IPR002300">
    <property type="entry name" value="aa-tRNA-synth_Ia"/>
</dbReference>
<dbReference type="InterPro" id="IPR033708">
    <property type="entry name" value="Anticodon_Ile_BEm"/>
</dbReference>
<dbReference type="InterPro" id="IPR002301">
    <property type="entry name" value="Ile-tRNA-ligase"/>
</dbReference>
<dbReference type="InterPro" id="IPR023585">
    <property type="entry name" value="Ile-tRNA-ligase_type1"/>
</dbReference>
<dbReference type="InterPro" id="IPR050081">
    <property type="entry name" value="Ile-tRNA_ligase"/>
</dbReference>
<dbReference type="InterPro" id="IPR013155">
    <property type="entry name" value="M/V/L/I-tRNA-synth_anticd-bd"/>
</dbReference>
<dbReference type="InterPro" id="IPR014729">
    <property type="entry name" value="Rossmann-like_a/b/a_fold"/>
</dbReference>
<dbReference type="InterPro" id="IPR009080">
    <property type="entry name" value="tRNAsynth_Ia_anticodon-bd"/>
</dbReference>
<dbReference type="InterPro" id="IPR009008">
    <property type="entry name" value="Val/Leu/Ile-tRNA-synth_edit"/>
</dbReference>
<dbReference type="NCBIfam" id="TIGR00392">
    <property type="entry name" value="ileS"/>
    <property type="match status" value="1"/>
</dbReference>
<dbReference type="PANTHER" id="PTHR42765:SF1">
    <property type="entry name" value="ISOLEUCINE--TRNA LIGASE, MITOCHONDRIAL"/>
    <property type="match status" value="1"/>
</dbReference>
<dbReference type="PANTHER" id="PTHR42765">
    <property type="entry name" value="SOLEUCYL-TRNA SYNTHETASE"/>
    <property type="match status" value="1"/>
</dbReference>
<dbReference type="Pfam" id="PF08264">
    <property type="entry name" value="Anticodon_1"/>
    <property type="match status" value="1"/>
</dbReference>
<dbReference type="Pfam" id="PF00133">
    <property type="entry name" value="tRNA-synt_1"/>
    <property type="match status" value="1"/>
</dbReference>
<dbReference type="PRINTS" id="PR00984">
    <property type="entry name" value="TRNASYNTHILE"/>
</dbReference>
<dbReference type="SUPFAM" id="SSF47323">
    <property type="entry name" value="Anticodon-binding domain of a subclass of class I aminoacyl-tRNA synthetases"/>
    <property type="match status" value="1"/>
</dbReference>
<dbReference type="SUPFAM" id="SSF52374">
    <property type="entry name" value="Nucleotidylyl transferase"/>
    <property type="match status" value="1"/>
</dbReference>
<dbReference type="SUPFAM" id="SSF50677">
    <property type="entry name" value="ValRS/IleRS/LeuRS editing domain"/>
    <property type="match status" value="1"/>
</dbReference>
<dbReference type="PROSITE" id="PS00178">
    <property type="entry name" value="AA_TRNA_LIGASE_I"/>
    <property type="match status" value="1"/>
</dbReference>